<feature type="chain" id="PRO_0000365642" description="Large ribosomal subunit protein uL5">
    <location>
        <begin position="1"/>
        <end position="171"/>
    </location>
</feature>
<gene>
    <name evidence="1" type="primary">rpl5</name>
    <name type="ordered locus">Mlab_0094</name>
</gene>
<dbReference type="EMBL" id="CP000559">
    <property type="protein sequence ID" value="ABN06271.1"/>
    <property type="molecule type" value="Genomic_DNA"/>
</dbReference>
<dbReference type="RefSeq" id="WP_011832472.1">
    <property type="nucleotide sequence ID" value="NC_008942.1"/>
</dbReference>
<dbReference type="SMR" id="A2SPL5"/>
<dbReference type="STRING" id="410358.Mlab_0094"/>
<dbReference type="GeneID" id="4795322"/>
<dbReference type="KEGG" id="mla:Mlab_0094"/>
<dbReference type="eggNOG" id="arCOG04092">
    <property type="taxonomic scope" value="Archaea"/>
</dbReference>
<dbReference type="HOGENOM" id="CLU_061015_3_0_2"/>
<dbReference type="Proteomes" id="UP000000365">
    <property type="component" value="Chromosome"/>
</dbReference>
<dbReference type="GO" id="GO:1990904">
    <property type="term" value="C:ribonucleoprotein complex"/>
    <property type="evidence" value="ECO:0007669"/>
    <property type="project" value="UniProtKB-KW"/>
</dbReference>
<dbReference type="GO" id="GO:0005840">
    <property type="term" value="C:ribosome"/>
    <property type="evidence" value="ECO:0007669"/>
    <property type="project" value="UniProtKB-KW"/>
</dbReference>
<dbReference type="GO" id="GO:0019843">
    <property type="term" value="F:rRNA binding"/>
    <property type="evidence" value="ECO:0007669"/>
    <property type="project" value="UniProtKB-UniRule"/>
</dbReference>
<dbReference type="GO" id="GO:0003735">
    <property type="term" value="F:structural constituent of ribosome"/>
    <property type="evidence" value="ECO:0007669"/>
    <property type="project" value="InterPro"/>
</dbReference>
<dbReference type="GO" id="GO:0000049">
    <property type="term" value="F:tRNA binding"/>
    <property type="evidence" value="ECO:0007669"/>
    <property type="project" value="UniProtKB-UniRule"/>
</dbReference>
<dbReference type="GO" id="GO:0006412">
    <property type="term" value="P:translation"/>
    <property type="evidence" value="ECO:0007669"/>
    <property type="project" value="UniProtKB-UniRule"/>
</dbReference>
<dbReference type="FunFam" id="3.30.1440.10:FF:000002">
    <property type="entry name" value="60S ribosomal protein L11"/>
    <property type="match status" value="1"/>
</dbReference>
<dbReference type="Gene3D" id="3.30.1440.10">
    <property type="match status" value="1"/>
</dbReference>
<dbReference type="HAMAP" id="MF_01333_A">
    <property type="entry name" value="Ribosomal_uL5_A"/>
    <property type="match status" value="1"/>
</dbReference>
<dbReference type="InterPro" id="IPR002132">
    <property type="entry name" value="Ribosomal_uL5"/>
</dbReference>
<dbReference type="InterPro" id="IPR022804">
    <property type="entry name" value="Ribosomal_uL5_arc"/>
</dbReference>
<dbReference type="InterPro" id="IPR031309">
    <property type="entry name" value="Ribosomal_uL5_C"/>
</dbReference>
<dbReference type="InterPro" id="IPR022803">
    <property type="entry name" value="Ribosomal_uL5_dom_sf"/>
</dbReference>
<dbReference type="InterPro" id="IPR031310">
    <property type="entry name" value="Ribosomal_uL5_N"/>
</dbReference>
<dbReference type="NCBIfam" id="NF003258">
    <property type="entry name" value="PRK04219.1"/>
    <property type="match status" value="1"/>
</dbReference>
<dbReference type="PANTHER" id="PTHR11994">
    <property type="entry name" value="60S RIBOSOMAL PROTEIN L11-RELATED"/>
    <property type="match status" value="1"/>
</dbReference>
<dbReference type="Pfam" id="PF00281">
    <property type="entry name" value="Ribosomal_L5"/>
    <property type="match status" value="1"/>
</dbReference>
<dbReference type="Pfam" id="PF00673">
    <property type="entry name" value="Ribosomal_L5_C"/>
    <property type="match status" value="1"/>
</dbReference>
<dbReference type="PIRSF" id="PIRSF002161">
    <property type="entry name" value="Ribosomal_L5"/>
    <property type="match status" value="1"/>
</dbReference>
<dbReference type="SUPFAM" id="SSF55282">
    <property type="entry name" value="RL5-like"/>
    <property type="match status" value="1"/>
</dbReference>
<sequence length="171" mass="19021">MTDMQTPFVAKVVVHMGVGEAGERLVNAENIMADLTKGAKPIRSYARNTLPAFGIRKGQPIGCKATLRGKKAMDFLEMALKTYAVENVLHTRQFDATGNFGFGIEEHTDFPGQAYDPKIGIYGMDIIAVIEKKGTRTARRKIQQKKINSKLHVAREESMKFVTETFGIEVE</sequence>
<protein>
    <recommendedName>
        <fullName evidence="1">Large ribosomal subunit protein uL5</fullName>
    </recommendedName>
    <alternativeName>
        <fullName evidence="2">50S ribosomal protein L5</fullName>
    </alternativeName>
</protein>
<accession>A2SPL5</accession>
<organism>
    <name type="scientific">Methanocorpusculum labreanum (strain ATCC 43576 / DSM 4855 / Z)</name>
    <dbReference type="NCBI Taxonomy" id="410358"/>
    <lineage>
        <taxon>Archaea</taxon>
        <taxon>Methanobacteriati</taxon>
        <taxon>Methanobacteriota</taxon>
        <taxon>Stenosarchaea group</taxon>
        <taxon>Methanomicrobia</taxon>
        <taxon>Methanomicrobiales</taxon>
        <taxon>Methanocorpusculaceae</taxon>
        <taxon>Methanocorpusculum</taxon>
    </lineage>
</organism>
<comment type="function">
    <text evidence="1">This is one of the proteins that bind and probably mediate the attachment of the 5S RNA into the large ribosomal subunit, where it forms part of the central protuberance. In the 70S ribosome it contacts protein S13 of the 30S subunit (bridge B1b), connecting the 2 subunits; this bridge is implicated in subunit movement. May contact the P site tRNA; the 5S rRNA and some of its associated proteins might help stabilize positioning of ribosome-bound tRNAs.</text>
</comment>
<comment type="subunit">
    <text evidence="1">Part of the 50S ribosomal subunit; contacts the 5S rRNA and probably tRNA. Forms a bridge to the 30S subunit in the 70S ribosome.</text>
</comment>
<comment type="similarity">
    <text evidence="1">Belongs to the universal ribosomal protein uL5 family.</text>
</comment>
<reference key="1">
    <citation type="journal article" date="2009" name="Stand. Genomic Sci.">
        <title>Complete genome sequence of Methanocorpusculum labreanum type strain Z.</title>
        <authorList>
            <person name="Anderson I.J."/>
            <person name="Sieprawska-Lupa M."/>
            <person name="Goltsman E."/>
            <person name="Lapidus A."/>
            <person name="Copeland A."/>
            <person name="Glavina Del Rio T."/>
            <person name="Tice H."/>
            <person name="Dalin E."/>
            <person name="Barry K."/>
            <person name="Pitluck S."/>
            <person name="Hauser L."/>
            <person name="Land M."/>
            <person name="Lucas S."/>
            <person name="Richardson P."/>
            <person name="Whitman W.B."/>
            <person name="Kyrpides N.C."/>
        </authorList>
    </citation>
    <scope>NUCLEOTIDE SEQUENCE [LARGE SCALE GENOMIC DNA]</scope>
    <source>
        <strain>ATCC 43576 / DSM 4855 / Z</strain>
    </source>
</reference>
<proteinExistence type="inferred from homology"/>
<name>RL5_METLZ</name>
<evidence type="ECO:0000255" key="1">
    <source>
        <dbReference type="HAMAP-Rule" id="MF_01333"/>
    </source>
</evidence>
<evidence type="ECO:0000305" key="2"/>
<keyword id="KW-1185">Reference proteome</keyword>
<keyword id="KW-0687">Ribonucleoprotein</keyword>
<keyword id="KW-0689">Ribosomal protein</keyword>
<keyword id="KW-0694">RNA-binding</keyword>
<keyword id="KW-0699">rRNA-binding</keyword>
<keyword id="KW-0820">tRNA-binding</keyword>